<organism>
    <name type="scientific">Shigella flexneri</name>
    <dbReference type="NCBI Taxonomy" id="623"/>
    <lineage>
        <taxon>Bacteria</taxon>
        <taxon>Pseudomonadati</taxon>
        <taxon>Pseudomonadota</taxon>
        <taxon>Gammaproteobacteria</taxon>
        <taxon>Enterobacterales</taxon>
        <taxon>Enterobacteriaceae</taxon>
        <taxon>Shigella</taxon>
    </lineage>
</organism>
<name>APAH_SHIFL</name>
<feature type="chain" id="PRO_0000198011" description="Bis(5'-nucleosyl)-tetraphosphatase, symmetrical">
    <location>
        <begin position="1"/>
        <end position="280"/>
    </location>
</feature>
<feature type="strand" evidence="2">
    <location>
        <begin position="3"/>
        <end position="6"/>
    </location>
</feature>
<feature type="helix" evidence="2">
    <location>
        <begin position="13"/>
        <end position="22"/>
    </location>
</feature>
<feature type="turn" evidence="2">
    <location>
        <begin position="27"/>
        <end position="29"/>
    </location>
</feature>
<feature type="strand" evidence="2">
    <location>
        <begin position="31"/>
        <end position="34"/>
    </location>
</feature>
<feature type="strand" evidence="2">
    <location>
        <begin position="39"/>
        <end position="43"/>
    </location>
</feature>
<feature type="helix" evidence="2">
    <location>
        <begin position="45"/>
        <end position="54"/>
    </location>
</feature>
<feature type="helix" evidence="2">
    <location>
        <begin position="55"/>
        <end position="58"/>
    </location>
</feature>
<feature type="strand" evidence="2">
    <location>
        <begin position="59"/>
        <end position="61"/>
    </location>
</feature>
<feature type="helix" evidence="2">
    <location>
        <begin position="65"/>
        <end position="74"/>
    </location>
</feature>
<feature type="helix" evidence="2">
    <location>
        <begin position="82"/>
        <end position="84"/>
    </location>
</feature>
<feature type="helix" evidence="2">
    <location>
        <begin position="87"/>
        <end position="90"/>
    </location>
</feature>
<feature type="helix" evidence="2">
    <location>
        <begin position="95"/>
        <end position="103"/>
    </location>
</feature>
<feature type="strand" evidence="2">
    <location>
        <begin position="107"/>
        <end position="111"/>
    </location>
</feature>
<feature type="turn" evidence="2">
    <location>
        <begin position="112"/>
        <end position="115"/>
    </location>
</feature>
<feature type="strand" evidence="2">
    <location>
        <begin position="116"/>
        <end position="121"/>
    </location>
</feature>
<feature type="helix" evidence="2">
    <location>
        <begin position="129"/>
        <end position="144"/>
    </location>
</feature>
<feature type="helix" evidence="2">
    <location>
        <begin position="148"/>
        <end position="154"/>
    </location>
</feature>
<feature type="helix" evidence="2">
    <location>
        <begin position="169"/>
        <end position="181"/>
    </location>
</feature>
<feature type="strand" evidence="2">
    <location>
        <begin position="185"/>
        <end position="187"/>
    </location>
</feature>
<feature type="strand" evidence="2">
    <location>
        <begin position="190"/>
        <end position="195"/>
    </location>
</feature>
<feature type="helix" evidence="2">
    <location>
        <begin position="200"/>
        <end position="202"/>
    </location>
</feature>
<feature type="helix" evidence="2">
    <location>
        <begin position="210"/>
        <end position="212"/>
    </location>
</feature>
<feature type="turn" evidence="2">
    <location>
        <begin position="216"/>
        <end position="220"/>
    </location>
</feature>
<feature type="strand" evidence="2">
    <location>
        <begin position="221"/>
        <end position="225"/>
    </location>
</feature>
<feature type="helix" evidence="2">
    <location>
        <begin position="229"/>
        <end position="231"/>
    </location>
</feature>
<feature type="strand" evidence="2">
    <location>
        <begin position="240"/>
        <end position="242"/>
    </location>
</feature>
<feature type="turn" evidence="2">
    <location>
        <begin position="247"/>
        <end position="250"/>
    </location>
</feature>
<feature type="strand" evidence="2">
    <location>
        <begin position="251"/>
        <end position="257"/>
    </location>
</feature>
<feature type="turn" evidence="2">
    <location>
        <begin position="258"/>
        <end position="261"/>
    </location>
</feature>
<feature type="strand" evidence="2">
    <location>
        <begin position="262"/>
        <end position="267"/>
    </location>
</feature>
<comment type="function">
    <text evidence="1">Hydrolyzes diadenosine 5',5'''-P1,P4-tetraphosphate to yield ADP.</text>
</comment>
<comment type="catalytic activity">
    <reaction evidence="1">
        <text>P(1),P(4)-bis(5'-adenosyl) tetraphosphate + H2O = 2 ADP + 2 H(+)</text>
        <dbReference type="Rhea" id="RHEA:24252"/>
        <dbReference type="ChEBI" id="CHEBI:15377"/>
        <dbReference type="ChEBI" id="CHEBI:15378"/>
        <dbReference type="ChEBI" id="CHEBI:58141"/>
        <dbReference type="ChEBI" id="CHEBI:456216"/>
        <dbReference type="EC" id="3.6.1.41"/>
    </reaction>
</comment>
<comment type="similarity">
    <text evidence="1">Belongs to the Ap4A hydrolase family.</text>
</comment>
<evidence type="ECO:0000255" key="1">
    <source>
        <dbReference type="HAMAP-Rule" id="MF_00199"/>
    </source>
</evidence>
<evidence type="ECO:0007829" key="2">
    <source>
        <dbReference type="PDB" id="2DFJ"/>
    </source>
</evidence>
<proteinExistence type="evidence at protein level"/>
<sequence length="280" mass="31283">MATYLIGDVHGCYDELIALLHKVEFTPGKDTLWLTGDLVARGPGSLDVLRYVKSLGDSVRLVLGNHDLHLLAVFAGISRNKPKDRLTPLLEAPDADELLNWLRRQPLLQIDEEKKLVMAHAGITPQWDLQTAKECARDVEAVLSSDSYPFFLDAMYGDMPNNWSPELRGLGRLRFITNAFTRMRFCFPNGQLDMYSKESPEEAPAPLKPWFAIPGPVAEEYSIAFGHWASLEGKGTPEGIYALDTGCCWGGSLTCLRWEDKQYFVQPSNRHKDLGEAAAS</sequence>
<dbReference type="EC" id="3.6.1.41" evidence="1"/>
<dbReference type="EMBL" id="AE005674">
    <property type="protein sequence ID" value="AAN41712.1"/>
    <property type="molecule type" value="Genomic_DNA"/>
</dbReference>
<dbReference type="EMBL" id="AE014073">
    <property type="protein sequence ID" value="AAP15592.1"/>
    <property type="molecule type" value="Genomic_DNA"/>
</dbReference>
<dbReference type="RefSeq" id="NP_706005.1">
    <property type="nucleotide sequence ID" value="NC_004337.2"/>
</dbReference>
<dbReference type="RefSeq" id="WP_000257186.1">
    <property type="nucleotide sequence ID" value="NZ_WPGW01000005.1"/>
</dbReference>
<dbReference type="PDB" id="2DFJ">
    <property type="method" value="X-ray"/>
    <property type="resolution" value="2.72 A"/>
    <property type="chains" value="A/B=1-280"/>
</dbReference>
<dbReference type="PDBsum" id="2DFJ"/>
<dbReference type="SMR" id="Q83SQ2"/>
<dbReference type="STRING" id="198214.SF0046"/>
<dbReference type="PaxDb" id="198214-SF0046"/>
<dbReference type="GeneID" id="1024575"/>
<dbReference type="KEGG" id="sfl:SF0046"/>
<dbReference type="KEGG" id="sfx:S0048"/>
<dbReference type="PATRIC" id="fig|198214.7.peg.55"/>
<dbReference type="HOGENOM" id="CLU_056184_2_0_6"/>
<dbReference type="EvolutionaryTrace" id="Q83SQ2"/>
<dbReference type="Proteomes" id="UP000001006">
    <property type="component" value="Chromosome"/>
</dbReference>
<dbReference type="Proteomes" id="UP000002673">
    <property type="component" value="Chromosome"/>
</dbReference>
<dbReference type="GO" id="GO:0008803">
    <property type="term" value="F:bis(5'-nucleosyl)-tetraphosphatase (symmetrical) activity"/>
    <property type="evidence" value="ECO:0007669"/>
    <property type="project" value="UniProtKB-UniRule"/>
</dbReference>
<dbReference type="CDD" id="cd07422">
    <property type="entry name" value="MPP_ApaH"/>
    <property type="match status" value="1"/>
</dbReference>
<dbReference type="FunFam" id="3.60.21.10:FF:000013">
    <property type="entry name" value="Bis(5'-nucleosyl)-tetraphosphatase, symmetrical"/>
    <property type="match status" value="1"/>
</dbReference>
<dbReference type="Gene3D" id="3.60.21.10">
    <property type="match status" value="1"/>
</dbReference>
<dbReference type="HAMAP" id="MF_00199">
    <property type="entry name" value="ApaH"/>
    <property type="match status" value="1"/>
</dbReference>
<dbReference type="InterPro" id="IPR004617">
    <property type="entry name" value="ApaH"/>
</dbReference>
<dbReference type="InterPro" id="IPR004843">
    <property type="entry name" value="Calcineurin-like_PHP_ApaH"/>
</dbReference>
<dbReference type="InterPro" id="IPR029052">
    <property type="entry name" value="Metallo-depent_PP-like"/>
</dbReference>
<dbReference type="NCBIfam" id="TIGR00668">
    <property type="entry name" value="apaH"/>
    <property type="match status" value="1"/>
</dbReference>
<dbReference type="NCBIfam" id="NF001204">
    <property type="entry name" value="PRK00166.1"/>
    <property type="match status" value="1"/>
</dbReference>
<dbReference type="PANTHER" id="PTHR40942">
    <property type="match status" value="1"/>
</dbReference>
<dbReference type="PANTHER" id="PTHR40942:SF4">
    <property type="entry name" value="CYTOCHROME C5"/>
    <property type="match status" value="1"/>
</dbReference>
<dbReference type="Pfam" id="PF00149">
    <property type="entry name" value="Metallophos"/>
    <property type="match status" value="1"/>
</dbReference>
<dbReference type="PIRSF" id="PIRSF000903">
    <property type="entry name" value="B5n-ttraPtase_sm"/>
    <property type="match status" value="1"/>
</dbReference>
<dbReference type="SUPFAM" id="SSF56300">
    <property type="entry name" value="Metallo-dependent phosphatases"/>
    <property type="match status" value="1"/>
</dbReference>
<reference key="1">
    <citation type="journal article" date="2002" name="Nucleic Acids Res.">
        <title>Genome sequence of Shigella flexneri 2a: insights into pathogenicity through comparison with genomes of Escherichia coli K12 and O157.</title>
        <authorList>
            <person name="Jin Q."/>
            <person name="Yuan Z."/>
            <person name="Xu J."/>
            <person name="Wang Y."/>
            <person name="Shen Y."/>
            <person name="Lu W."/>
            <person name="Wang J."/>
            <person name="Liu H."/>
            <person name="Yang J."/>
            <person name="Yang F."/>
            <person name="Zhang X."/>
            <person name="Zhang J."/>
            <person name="Yang G."/>
            <person name="Wu H."/>
            <person name="Qu D."/>
            <person name="Dong J."/>
            <person name="Sun L."/>
            <person name="Xue Y."/>
            <person name="Zhao A."/>
            <person name="Gao Y."/>
            <person name="Zhu J."/>
            <person name="Kan B."/>
            <person name="Ding K."/>
            <person name="Chen S."/>
            <person name="Cheng H."/>
            <person name="Yao Z."/>
            <person name="He B."/>
            <person name="Chen R."/>
            <person name="Ma D."/>
            <person name="Qiang B."/>
            <person name="Wen Y."/>
            <person name="Hou Y."/>
            <person name="Yu J."/>
        </authorList>
    </citation>
    <scope>NUCLEOTIDE SEQUENCE [LARGE SCALE GENOMIC DNA]</scope>
    <source>
        <strain>301 / Serotype 2a</strain>
    </source>
</reference>
<reference key="2">
    <citation type="journal article" date="2003" name="Infect. Immun.">
        <title>Complete genome sequence and comparative genomics of Shigella flexneri serotype 2a strain 2457T.</title>
        <authorList>
            <person name="Wei J."/>
            <person name="Goldberg M.B."/>
            <person name="Burland V."/>
            <person name="Venkatesan M.M."/>
            <person name="Deng W."/>
            <person name="Fournier G."/>
            <person name="Mayhew G.F."/>
            <person name="Plunkett G. III"/>
            <person name="Rose D.J."/>
            <person name="Darling A."/>
            <person name="Mau B."/>
            <person name="Perna N.T."/>
            <person name="Payne S.M."/>
            <person name="Runyen-Janecky L.J."/>
            <person name="Zhou S."/>
            <person name="Schwartz D.C."/>
            <person name="Blattner F.R."/>
        </authorList>
    </citation>
    <scope>NUCLEOTIDE SEQUENCE [LARGE SCALE GENOMIC DNA]</scope>
    <source>
        <strain>ATCC 700930 / 2457T / Serotype 2a</strain>
    </source>
</reference>
<gene>
    <name evidence="1" type="primary">apaH</name>
    <name type="ordered locus">SF0046</name>
    <name type="ordered locus">S0048</name>
</gene>
<keyword id="KW-0002">3D-structure</keyword>
<keyword id="KW-0378">Hydrolase</keyword>
<keyword id="KW-1185">Reference proteome</keyword>
<protein>
    <recommendedName>
        <fullName evidence="1">Bis(5'-nucleosyl)-tetraphosphatase, symmetrical</fullName>
        <ecNumber evidence="1">3.6.1.41</ecNumber>
    </recommendedName>
    <alternativeName>
        <fullName evidence="1">Ap4A hydrolase</fullName>
    </alternativeName>
    <alternativeName>
        <fullName evidence="1">Diadenosine 5',5'''-P1,P4-tetraphosphate pyrophosphohydrolase</fullName>
    </alternativeName>
    <alternativeName>
        <fullName evidence="1">Diadenosine tetraphosphatase</fullName>
    </alternativeName>
</protein>
<accession>Q83SQ2</accession>
<accession>Q7C3B6</accession>